<gene>
    <name type="primary">aah1</name>
    <name type="synonym">nadA</name>
    <name type="ORF">AN6078</name>
</gene>
<dbReference type="EC" id="3.5.4.2" evidence="1"/>
<dbReference type="EMBL" id="AF123460">
    <property type="protein sequence ID" value="AAL56636.1"/>
    <property type="molecule type" value="Genomic_DNA"/>
</dbReference>
<dbReference type="EMBL" id="AACD01000104">
    <property type="protein sequence ID" value="EAA58053.1"/>
    <property type="molecule type" value="Genomic_DNA"/>
</dbReference>
<dbReference type="EMBL" id="BN001301">
    <property type="protein sequence ID" value="CBF70232.1"/>
    <property type="molecule type" value="Genomic_DNA"/>
</dbReference>
<dbReference type="RefSeq" id="XP_663682.1">
    <property type="nucleotide sequence ID" value="XM_658590.1"/>
</dbReference>
<dbReference type="SMR" id="Q8X1T6"/>
<dbReference type="FunCoup" id="Q8X1T6">
    <property type="interactions" value="590"/>
</dbReference>
<dbReference type="STRING" id="227321.Q8X1T6"/>
<dbReference type="EnsemblFungi" id="CBF70232">
    <property type="protein sequence ID" value="CBF70232"/>
    <property type="gene ID" value="ANIA_06078"/>
</dbReference>
<dbReference type="KEGG" id="ani:ANIA_06078"/>
<dbReference type="VEuPathDB" id="FungiDB:AN6078"/>
<dbReference type="eggNOG" id="KOG1097">
    <property type="taxonomic scope" value="Eukaryota"/>
</dbReference>
<dbReference type="HOGENOM" id="CLU_039228_7_0_1"/>
<dbReference type="InParanoid" id="Q8X1T6"/>
<dbReference type="OMA" id="NHFTIHA"/>
<dbReference type="OrthoDB" id="272271at2759"/>
<dbReference type="BRENDA" id="3.5.4.2">
    <property type="organism ID" value="517"/>
</dbReference>
<dbReference type="SABIO-RK" id="Q8X1T6"/>
<dbReference type="Proteomes" id="UP000000560">
    <property type="component" value="Chromosome I"/>
</dbReference>
<dbReference type="GO" id="GO:0005737">
    <property type="term" value="C:cytoplasm"/>
    <property type="evidence" value="ECO:0007669"/>
    <property type="project" value="UniProtKB-SubCell"/>
</dbReference>
<dbReference type="GO" id="GO:0005634">
    <property type="term" value="C:nucleus"/>
    <property type="evidence" value="ECO:0007669"/>
    <property type="project" value="UniProtKB-SubCell"/>
</dbReference>
<dbReference type="GO" id="GO:0000034">
    <property type="term" value="F:adenine deaminase activity"/>
    <property type="evidence" value="ECO:0000314"/>
    <property type="project" value="UniProtKB"/>
</dbReference>
<dbReference type="GO" id="GO:0008270">
    <property type="term" value="F:zinc ion binding"/>
    <property type="evidence" value="ECO:0007669"/>
    <property type="project" value="UniProtKB-UniRule"/>
</dbReference>
<dbReference type="GO" id="GO:0006146">
    <property type="term" value="P:adenine catabolic process"/>
    <property type="evidence" value="ECO:0000314"/>
    <property type="project" value="UniProtKB"/>
</dbReference>
<dbReference type="GO" id="GO:0043103">
    <property type="term" value="P:hypoxanthine salvage"/>
    <property type="evidence" value="ECO:0000318"/>
    <property type="project" value="GO_Central"/>
</dbReference>
<dbReference type="GO" id="GO:0009117">
    <property type="term" value="P:nucleotide metabolic process"/>
    <property type="evidence" value="ECO:0007669"/>
    <property type="project" value="UniProtKB-KW"/>
</dbReference>
<dbReference type="GO" id="GO:0006145">
    <property type="term" value="P:purine nucleobase catabolic process"/>
    <property type="evidence" value="ECO:0000270"/>
    <property type="project" value="AspGD"/>
</dbReference>
<dbReference type="GO" id="GO:0009168">
    <property type="term" value="P:purine ribonucleoside monophosphate biosynthetic process"/>
    <property type="evidence" value="ECO:0007669"/>
    <property type="project" value="InterPro"/>
</dbReference>
<dbReference type="CDD" id="cd01320">
    <property type="entry name" value="ADA"/>
    <property type="match status" value="1"/>
</dbReference>
<dbReference type="FunFam" id="3.20.20.140:FF:000039">
    <property type="entry name" value="Adenine deaminase"/>
    <property type="match status" value="1"/>
</dbReference>
<dbReference type="Gene3D" id="3.20.20.140">
    <property type="entry name" value="Metal-dependent hydrolases"/>
    <property type="match status" value="1"/>
</dbReference>
<dbReference type="HAMAP" id="MF_01962">
    <property type="entry name" value="Adenine_deaminase"/>
    <property type="match status" value="1"/>
</dbReference>
<dbReference type="InterPro" id="IPR006650">
    <property type="entry name" value="A/AMP_deam_AS"/>
</dbReference>
<dbReference type="InterPro" id="IPR001365">
    <property type="entry name" value="A_deaminase_dom"/>
</dbReference>
<dbReference type="InterPro" id="IPR028892">
    <property type="entry name" value="ADE"/>
</dbReference>
<dbReference type="InterPro" id="IPR006330">
    <property type="entry name" value="Ado/ade_deaminase"/>
</dbReference>
<dbReference type="InterPro" id="IPR032466">
    <property type="entry name" value="Metal_Hydrolase"/>
</dbReference>
<dbReference type="NCBIfam" id="TIGR01430">
    <property type="entry name" value="aden_deam"/>
    <property type="match status" value="1"/>
</dbReference>
<dbReference type="PANTHER" id="PTHR43114">
    <property type="entry name" value="ADENINE DEAMINASE"/>
    <property type="match status" value="1"/>
</dbReference>
<dbReference type="PANTHER" id="PTHR43114:SF6">
    <property type="entry name" value="ADENINE DEAMINASE"/>
    <property type="match status" value="1"/>
</dbReference>
<dbReference type="Pfam" id="PF00962">
    <property type="entry name" value="A_deaminase"/>
    <property type="match status" value="1"/>
</dbReference>
<dbReference type="SUPFAM" id="SSF51556">
    <property type="entry name" value="Metallo-dependent hydrolases"/>
    <property type="match status" value="1"/>
</dbReference>
<dbReference type="PROSITE" id="PS00485">
    <property type="entry name" value="A_DEAMINASE"/>
    <property type="match status" value="1"/>
</dbReference>
<organism>
    <name type="scientific">Emericella nidulans (strain FGSC A4 / ATCC 38163 / CBS 112.46 / NRRL 194 / M139)</name>
    <name type="common">Aspergillus nidulans</name>
    <dbReference type="NCBI Taxonomy" id="227321"/>
    <lineage>
        <taxon>Eukaryota</taxon>
        <taxon>Fungi</taxon>
        <taxon>Dikarya</taxon>
        <taxon>Ascomycota</taxon>
        <taxon>Pezizomycotina</taxon>
        <taxon>Eurotiomycetes</taxon>
        <taxon>Eurotiomycetidae</taxon>
        <taxon>Eurotiales</taxon>
        <taxon>Aspergillaceae</taxon>
        <taxon>Aspergillus</taxon>
        <taxon>Aspergillus subgen. Nidulantes</taxon>
    </lineage>
</organism>
<feature type="chain" id="PRO_0000256234" description="Adenine deaminase">
    <location>
        <begin position="1"/>
        <end position="364"/>
    </location>
</feature>
<feature type="active site" description="Proton donor" evidence="1">
    <location>
        <position position="224"/>
    </location>
</feature>
<feature type="binding site" evidence="1">
    <location>
        <position position="25"/>
    </location>
    <ligand>
        <name>Zn(2+)</name>
        <dbReference type="ChEBI" id="CHEBI:29105"/>
        <note>catalytic</note>
    </ligand>
</feature>
<feature type="binding site" evidence="1">
    <location>
        <position position="27"/>
    </location>
    <ligand>
        <name>Zn(2+)</name>
        <dbReference type="ChEBI" id="CHEBI:29105"/>
        <note>catalytic</note>
    </ligand>
</feature>
<feature type="binding site" evidence="1">
    <location>
        <position position="221"/>
    </location>
    <ligand>
        <name>Zn(2+)</name>
        <dbReference type="ChEBI" id="CHEBI:29105"/>
        <note>catalytic</note>
    </ligand>
</feature>
<feature type="binding site" evidence="1">
    <location>
        <position position="301"/>
    </location>
    <ligand>
        <name>Zn(2+)</name>
        <dbReference type="ChEBI" id="CHEBI:29105"/>
        <note>catalytic</note>
    </ligand>
</feature>
<feature type="binding site" evidence="1">
    <location>
        <position position="302"/>
    </location>
    <ligand>
        <name>substrate</name>
    </ligand>
</feature>
<feature type="site" description="Important for catalytic activity" evidence="1">
    <location>
        <position position="244"/>
    </location>
</feature>
<name>ADE_EMENI</name>
<accession>Q8X1T6</accession>
<accession>C8V2S4</accession>
<accession>Q5B052</accession>
<keyword id="KW-0963">Cytoplasm</keyword>
<keyword id="KW-0378">Hydrolase</keyword>
<keyword id="KW-0479">Metal-binding</keyword>
<keyword id="KW-0546">Nucleotide metabolism</keyword>
<keyword id="KW-0539">Nucleus</keyword>
<keyword id="KW-1185">Reference proteome</keyword>
<keyword id="KW-0862">Zinc</keyword>
<evidence type="ECO:0000255" key="1">
    <source>
        <dbReference type="HAMAP-Rule" id="MF_03145"/>
    </source>
</evidence>
<evidence type="ECO:0000269" key="2">
    <source>
    </source>
</evidence>
<protein>
    <recommendedName>
        <fullName evidence="1">Adenine deaminase</fullName>
        <shortName evidence="1">ADE</shortName>
        <ecNumber evidence="1">3.5.4.2</ecNumber>
    </recommendedName>
    <alternativeName>
        <fullName evidence="1">Adenine aminohydrolase</fullName>
        <shortName evidence="1">AAH</shortName>
    </alternativeName>
</protein>
<proteinExistence type="evidence at protein level"/>
<sequence length="364" mass="40812">MCPPNTPYQSQWHAFLHSLPKCEHHVHLEGCLEPPLIFSMARKNNVSLPSPSSNPAYTSVETLSKRYGHFSSLDDFLSFYFIGMTVLKTQSDFAELAWTYFKRAHAEGVHHTEVFFDPQVHMERGLEYRVIVDGYVDGCKRAEKELGISTRLIMCFLKHLPLESAQRLYDTALNEGDLGLDGRNPVIHGLGASSSEVGPPKDLFRPIYLGAKEKSINLTAHAGEEGDASYIAAALDMGATRIDHGIRLGEDPELMERVAREEVLLTVCPVSNLQLKCVKSVAEVPIRKFLDAGVRFSINSDDPAYFGAYILECYCAVQEAFNLSVADWRLIAENGVKGSWIGEERKNELLWRIDECVKRFEGVL</sequence>
<comment type="function">
    <text evidence="1 2">Catalyzes the hydrolytic deamination of adenine to hypoxanthine. Plays an important role in the purine salvage pathway and in nitrogen catabolism. Has no activity with adenosine as a substrate.</text>
</comment>
<comment type="catalytic activity">
    <reaction evidence="1">
        <text>adenine + H2O + H(+) = hypoxanthine + NH4(+)</text>
        <dbReference type="Rhea" id="RHEA:23688"/>
        <dbReference type="ChEBI" id="CHEBI:15377"/>
        <dbReference type="ChEBI" id="CHEBI:15378"/>
        <dbReference type="ChEBI" id="CHEBI:16708"/>
        <dbReference type="ChEBI" id="CHEBI:17368"/>
        <dbReference type="ChEBI" id="CHEBI:28938"/>
        <dbReference type="EC" id="3.5.4.2"/>
    </reaction>
</comment>
<comment type="cofactor">
    <cofactor evidence="1">
        <name>Zn(2+)</name>
        <dbReference type="ChEBI" id="CHEBI:29105"/>
    </cofactor>
    <text evidence="1">Binds 1 zinc ion per subunit.</text>
</comment>
<comment type="biophysicochemical properties">
    <kinetics>
        <KM evidence="2">290 uM for adenine</KM>
        <Vmax evidence="2">200.0 nmol/min/mg enzyme</Vmax>
    </kinetics>
</comment>
<comment type="subcellular location">
    <subcellularLocation>
        <location evidence="1">Cytoplasm</location>
    </subcellularLocation>
    <subcellularLocation>
        <location evidence="1">Nucleus</location>
    </subcellularLocation>
</comment>
<comment type="similarity">
    <text evidence="1">Belongs to the metallo-dependent hydrolases superfamily. Adenosine and AMP deaminases family. Adenine deaminase type 2 subfamily.</text>
</comment>
<reference key="1">
    <citation type="journal article" date="2003" name="J. Mol. Biol.">
        <title>Sub-families of alpha/beta barrel enzymes: a new adenine deaminase family.</title>
        <authorList>
            <person name="Ribard C."/>
            <person name="Rochet M."/>
            <person name="Labedan B."/>
            <person name="Daignan-Fornier B."/>
            <person name="Alzari P."/>
            <person name="Scazzocchio C."/>
            <person name="Oestreicher N."/>
        </authorList>
    </citation>
    <scope>NUCLEOTIDE SEQUENCE [GENOMIC DNA]</scope>
    <scope>FUNCTION</scope>
    <scope>BIOPHYSICOCHEMICAL PROPERTIES</scope>
    <source>
        <tissue>Mycelium</tissue>
    </source>
</reference>
<reference key="2">
    <citation type="journal article" date="2005" name="Nature">
        <title>Sequencing of Aspergillus nidulans and comparative analysis with A. fumigatus and A. oryzae.</title>
        <authorList>
            <person name="Galagan J.E."/>
            <person name="Calvo S.E."/>
            <person name="Cuomo C."/>
            <person name="Ma L.-J."/>
            <person name="Wortman J.R."/>
            <person name="Batzoglou S."/>
            <person name="Lee S.-I."/>
            <person name="Bastuerkmen M."/>
            <person name="Spevak C.C."/>
            <person name="Clutterbuck J."/>
            <person name="Kapitonov V."/>
            <person name="Jurka J."/>
            <person name="Scazzocchio C."/>
            <person name="Farman M.L."/>
            <person name="Butler J."/>
            <person name="Purcell S."/>
            <person name="Harris S."/>
            <person name="Braus G.H."/>
            <person name="Draht O."/>
            <person name="Busch S."/>
            <person name="D'Enfert C."/>
            <person name="Bouchier C."/>
            <person name="Goldman G.H."/>
            <person name="Bell-Pedersen D."/>
            <person name="Griffiths-Jones S."/>
            <person name="Doonan J.H."/>
            <person name="Yu J."/>
            <person name="Vienken K."/>
            <person name="Pain A."/>
            <person name="Freitag M."/>
            <person name="Selker E.U."/>
            <person name="Archer D.B."/>
            <person name="Penalva M.A."/>
            <person name="Oakley B.R."/>
            <person name="Momany M."/>
            <person name="Tanaka T."/>
            <person name="Kumagai T."/>
            <person name="Asai K."/>
            <person name="Machida M."/>
            <person name="Nierman W.C."/>
            <person name="Denning D.W."/>
            <person name="Caddick M.X."/>
            <person name="Hynes M."/>
            <person name="Paoletti M."/>
            <person name="Fischer R."/>
            <person name="Miller B.L."/>
            <person name="Dyer P.S."/>
            <person name="Sachs M.S."/>
            <person name="Osmani S.A."/>
            <person name="Birren B.W."/>
        </authorList>
    </citation>
    <scope>NUCLEOTIDE SEQUENCE [LARGE SCALE GENOMIC DNA]</scope>
    <source>
        <strain>FGSC A4 / ATCC 38163 / CBS 112.46 / NRRL 194 / M139</strain>
    </source>
</reference>
<reference key="3">
    <citation type="journal article" date="2009" name="Fungal Genet. Biol.">
        <title>The 2008 update of the Aspergillus nidulans genome annotation: a community effort.</title>
        <authorList>
            <person name="Wortman J.R."/>
            <person name="Gilsenan J.M."/>
            <person name="Joardar V."/>
            <person name="Deegan J."/>
            <person name="Clutterbuck J."/>
            <person name="Andersen M.R."/>
            <person name="Archer D."/>
            <person name="Bencina M."/>
            <person name="Braus G."/>
            <person name="Coutinho P."/>
            <person name="von Dohren H."/>
            <person name="Doonan J."/>
            <person name="Driessen A.J."/>
            <person name="Durek P."/>
            <person name="Espeso E."/>
            <person name="Fekete E."/>
            <person name="Flipphi M."/>
            <person name="Estrada C.G."/>
            <person name="Geysens S."/>
            <person name="Goldman G."/>
            <person name="de Groot P.W."/>
            <person name="Hansen K."/>
            <person name="Harris S.D."/>
            <person name="Heinekamp T."/>
            <person name="Helmstaedt K."/>
            <person name="Henrissat B."/>
            <person name="Hofmann G."/>
            <person name="Homan T."/>
            <person name="Horio T."/>
            <person name="Horiuchi H."/>
            <person name="James S."/>
            <person name="Jones M."/>
            <person name="Karaffa L."/>
            <person name="Karanyi Z."/>
            <person name="Kato M."/>
            <person name="Keller N."/>
            <person name="Kelly D.E."/>
            <person name="Kiel J.A."/>
            <person name="Kim J.M."/>
            <person name="van der Klei I.J."/>
            <person name="Klis F.M."/>
            <person name="Kovalchuk A."/>
            <person name="Krasevec N."/>
            <person name="Kubicek C.P."/>
            <person name="Liu B."/>
            <person name="Maccabe A."/>
            <person name="Meyer V."/>
            <person name="Mirabito P."/>
            <person name="Miskei M."/>
            <person name="Mos M."/>
            <person name="Mullins J."/>
            <person name="Nelson D.R."/>
            <person name="Nielsen J."/>
            <person name="Oakley B.R."/>
            <person name="Osmani S.A."/>
            <person name="Pakula T."/>
            <person name="Paszewski A."/>
            <person name="Paulsen I."/>
            <person name="Pilsyk S."/>
            <person name="Pocsi I."/>
            <person name="Punt P.J."/>
            <person name="Ram A.F."/>
            <person name="Ren Q."/>
            <person name="Robellet X."/>
            <person name="Robson G."/>
            <person name="Seiboth B."/>
            <person name="van Solingen P."/>
            <person name="Specht T."/>
            <person name="Sun J."/>
            <person name="Taheri-Talesh N."/>
            <person name="Takeshita N."/>
            <person name="Ussery D."/>
            <person name="vanKuyk P.A."/>
            <person name="Visser H."/>
            <person name="van de Vondervoort P.J."/>
            <person name="de Vries R.P."/>
            <person name="Walton J."/>
            <person name="Xiang X."/>
            <person name="Xiong Y."/>
            <person name="Zeng A.P."/>
            <person name="Brandt B.W."/>
            <person name="Cornell M.J."/>
            <person name="van den Hondel C.A."/>
            <person name="Visser J."/>
            <person name="Oliver S.G."/>
            <person name="Turner G."/>
        </authorList>
    </citation>
    <scope>GENOME REANNOTATION</scope>
    <source>
        <strain>FGSC A4 / ATCC 38163 / CBS 112.46 / NRRL 194 / M139</strain>
    </source>
</reference>